<feature type="chain" id="PRO_0000288641" description="Abscisic acid 8'-hydroxylase 3">
    <location>
        <begin position="1"/>
        <end position="463"/>
    </location>
</feature>
<feature type="transmembrane region" description="Helical" evidence="3">
    <location>
        <begin position="6"/>
        <end position="26"/>
    </location>
</feature>
<feature type="binding site" description="axial binding residue" evidence="1">
    <location>
        <position position="411"/>
    </location>
    <ligand>
        <name>heme</name>
        <dbReference type="ChEBI" id="CHEBI:30413"/>
    </ligand>
    <ligandPart>
        <name>Fe</name>
        <dbReference type="ChEBI" id="CHEBI:18248"/>
    </ligandPart>
</feature>
<feature type="splice variant" id="VSP_025739" description="In isoform 2." evidence="8">
    <original>WSIVGPSDGIQYGP</original>
    <variation>LVHLQNDNSPFGN</variation>
    <location>
        <begin position="434"/>
        <end position="447"/>
    </location>
</feature>
<feature type="splice variant" id="VSP_025740" description="In isoform 2." evidence="8">
    <location>
        <begin position="448"/>
        <end position="463"/>
    </location>
</feature>
<feature type="mutagenesis site" description="Loss of activity." evidence="4">
    <original>C</original>
    <variation>A</variation>
    <location>
        <position position="411"/>
    </location>
</feature>
<sequence>MDFSGLFLTLSAAALFLCLLRFIAGVRRSSSTKLPLPPGTMGYPYVGETFQLYSQDPNVFFAAKQRRYGSVFKTHVLGCPCVMISSPEAAKFVLVTKSHLFKPTFPASKERMLGKQAIFFHQGDYHSKLRKLVLRAFMPDAIRNMVPHIESIAQESLNSWDGTQLNTYQEMKTYTFNVALISILGKDEVYYREDLKRCYYILEKGYNSMPINLPGTLFHKAMKARKELAQILANILSKRRQNPSSHTDLLGSFMEDKAGLTDEQIADNIIGVIFAARDTTASVLTWILKYLADNPTVLEAVTEEQMAIRKDKKEGESLTWEDTKKMPLTYRVIQETLRAATILSFTFREAVEDVEYEGYLIPKGWKVLPLFRNIHHNADIFSDPGKFDPSRFEVAPKPNTFMPFGSGIHSCPGNELAKLEISVLIHHLTTKYRWSIVGPSDGIQYGPFALPQNGLPIALERKP</sequence>
<name>ABAH3_ARATH</name>
<proteinExistence type="evidence at protein level"/>
<gene>
    <name type="primary">CYP707A3</name>
    <name type="ordered locus">At5g45340</name>
    <name type="ORF">K9E15.12</name>
</gene>
<accession>Q9FH76</accession>
<accession>Q3E8G7</accession>
<keyword id="KW-0025">Alternative splicing</keyword>
<keyword id="KW-0349">Heme</keyword>
<keyword id="KW-0408">Iron</keyword>
<keyword id="KW-0472">Membrane</keyword>
<keyword id="KW-0479">Metal-binding</keyword>
<keyword id="KW-0503">Monooxygenase</keyword>
<keyword id="KW-0560">Oxidoreductase</keyword>
<keyword id="KW-1185">Reference proteome</keyword>
<keyword id="KW-0346">Stress response</keyword>
<keyword id="KW-0812">Transmembrane</keyword>
<keyword id="KW-1133">Transmembrane helix</keyword>
<organism>
    <name type="scientific">Arabidopsis thaliana</name>
    <name type="common">Mouse-ear cress</name>
    <dbReference type="NCBI Taxonomy" id="3702"/>
    <lineage>
        <taxon>Eukaryota</taxon>
        <taxon>Viridiplantae</taxon>
        <taxon>Streptophyta</taxon>
        <taxon>Embryophyta</taxon>
        <taxon>Tracheophyta</taxon>
        <taxon>Spermatophyta</taxon>
        <taxon>Magnoliopsida</taxon>
        <taxon>eudicotyledons</taxon>
        <taxon>Gunneridae</taxon>
        <taxon>Pentapetalae</taxon>
        <taxon>rosids</taxon>
        <taxon>malvids</taxon>
        <taxon>Brassicales</taxon>
        <taxon>Brassicaceae</taxon>
        <taxon>Camelineae</taxon>
        <taxon>Arabidopsis</taxon>
    </lineage>
</organism>
<reference key="1">
    <citation type="journal article" date="2004" name="Plant Physiol.">
        <title>Arabidopsis CYP707As encode (+)-abscisic acid 8'-hydroxylase, a key enzyme in the oxidative catabolism of abscisic acid.</title>
        <authorList>
            <person name="Saito S."/>
            <person name="Hirai N."/>
            <person name="Matsumoto C."/>
            <person name="Ohigashi H."/>
            <person name="Ohta D."/>
            <person name="Sakata K."/>
            <person name="Mizutani M."/>
        </authorList>
    </citation>
    <scope>NUCLEOTIDE SEQUENCE [MRNA] (ISOFORM 1)</scope>
    <scope>FUNCTION</scope>
    <scope>BIOPHYSICOCHEMICAL PROPERTIES</scope>
    <scope>TISSUE SPECIFICITY</scope>
    <scope>INDUCTION</scope>
</reference>
<reference key="2">
    <citation type="journal article" date="2000" name="DNA Res.">
        <title>Structural analysis of Arabidopsis thaliana chromosome 5. X. Sequence features of the regions of 3,076,755 bp covered by sixty P1 and TAC clones.</title>
        <authorList>
            <person name="Sato S."/>
            <person name="Nakamura Y."/>
            <person name="Kaneko T."/>
            <person name="Katoh T."/>
            <person name="Asamizu E."/>
            <person name="Kotani H."/>
            <person name="Tabata S."/>
        </authorList>
    </citation>
    <scope>NUCLEOTIDE SEQUENCE [LARGE SCALE GENOMIC DNA]</scope>
    <source>
        <strain>cv. Columbia</strain>
    </source>
</reference>
<reference key="3">
    <citation type="journal article" date="2017" name="Plant J.">
        <title>Araport11: a complete reannotation of the Arabidopsis thaliana reference genome.</title>
        <authorList>
            <person name="Cheng C.Y."/>
            <person name="Krishnakumar V."/>
            <person name="Chan A.P."/>
            <person name="Thibaud-Nissen F."/>
            <person name="Schobel S."/>
            <person name="Town C.D."/>
        </authorList>
    </citation>
    <scope>GENOME REANNOTATION</scope>
    <source>
        <strain>cv. Columbia</strain>
    </source>
</reference>
<reference key="4">
    <citation type="journal article" date="2003" name="Science">
        <title>Empirical analysis of transcriptional activity in the Arabidopsis genome.</title>
        <authorList>
            <person name="Yamada K."/>
            <person name="Lim J."/>
            <person name="Dale J.M."/>
            <person name="Chen H."/>
            <person name="Shinn P."/>
            <person name="Palm C.J."/>
            <person name="Southwick A.M."/>
            <person name="Wu H.C."/>
            <person name="Kim C.J."/>
            <person name="Nguyen M."/>
            <person name="Pham P.K."/>
            <person name="Cheuk R.F."/>
            <person name="Karlin-Newmann G."/>
            <person name="Liu S.X."/>
            <person name="Lam B."/>
            <person name="Sakano H."/>
            <person name="Wu T."/>
            <person name="Yu G."/>
            <person name="Miranda M."/>
            <person name="Quach H.L."/>
            <person name="Tripp M."/>
            <person name="Chang C.H."/>
            <person name="Lee J.M."/>
            <person name="Toriumi M.J."/>
            <person name="Chan M.M."/>
            <person name="Tang C.C."/>
            <person name="Onodera C.S."/>
            <person name="Deng J.M."/>
            <person name="Akiyama K."/>
            <person name="Ansari Y."/>
            <person name="Arakawa T."/>
            <person name="Banh J."/>
            <person name="Banno F."/>
            <person name="Bowser L."/>
            <person name="Brooks S.Y."/>
            <person name="Carninci P."/>
            <person name="Chao Q."/>
            <person name="Choy N."/>
            <person name="Enju A."/>
            <person name="Goldsmith A.D."/>
            <person name="Gurjal M."/>
            <person name="Hansen N.F."/>
            <person name="Hayashizaki Y."/>
            <person name="Johnson-Hopson C."/>
            <person name="Hsuan V.W."/>
            <person name="Iida K."/>
            <person name="Karnes M."/>
            <person name="Khan S."/>
            <person name="Koesema E."/>
            <person name="Ishida J."/>
            <person name="Jiang P.X."/>
            <person name="Jones T."/>
            <person name="Kawai J."/>
            <person name="Kamiya A."/>
            <person name="Meyers C."/>
            <person name="Nakajima M."/>
            <person name="Narusaka M."/>
            <person name="Seki M."/>
            <person name="Sakurai T."/>
            <person name="Satou M."/>
            <person name="Tamse R."/>
            <person name="Vaysberg M."/>
            <person name="Wallender E.K."/>
            <person name="Wong C."/>
            <person name="Yamamura Y."/>
            <person name="Yuan S."/>
            <person name="Shinozaki K."/>
            <person name="Davis R.W."/>
            <person name="Theologis A."/>
            <person name="Ecker J.R."/>
        </authorList>
    </citation>
    <scope>NUCLEOTIDE SEQUENCE [LARGE SCALE MRNA] (ISOFORM 1)</scope>
    <source>
        <strain>cv. Columbia</strain>
    </source>
</reference>
<reference key="5">
    <citation type="journal article" date="2004" name="EMBO J.">
        <title>The Arabidopsis cytochrome P450 CYP707A encodes ABA 8'-hydroxylases: key enzymes in ABA catabolism.</title>
        <authorList>
            <person name="Kushiro T."/>
            <person name="Okamoto M."/>
            <person name="Nakabayashi K."/>
            <person name="Yamagishi K."/>
            <person name="Kitamura S."/>
            <person name="Asami T."/>
            <person name="Hirai N."/>
            <person name="Koshiba T."/>
            <person name="Kamiya Y."/>
            <person name="Nambara E."/>
        </authorList>
    </citation>
    <scope>IDENTIFICATION</scope>
    <scope>FUNCTION</scope>
    <scope>MUTAGENESIS OF CYS-411</scope>
    <scope>ACTIVITY REGULATION</scope>
    <scope>TISSUE SPECIFICITY</scope>
    <scope>DEVELOPMENTAL STAGE</scope>
    <scope>INDUCTION</scope>
</reference>
<reference key="6">
    <citation type="journal article" date="2006" name="Plant J.">
        <title>CYP707A3, a major ABA 8'-hydroxylase involved in dehydration and rehydration response in Arabidopsis thaliana.</title>
        <authorList>
            <person name="Umezawa T."/>
            <person name="Okamoto M."/>
            <person name="Kushiro T."/>
            <person name="Nambara E."/>
            <person name="Oono Y."/>
            <person name="Seki M."/>
            <person name="Kobayashi M."/>
            <person name="Koshiba T."/>
            <person name="Kamiya Y."/>
            <person name="Shinozaki K."/>
        </authorList>
    </citation>
    <scope>FUNCTION</scope>
    <scope>INDUCTION</scope>
    <scope>DISRUPTION PHENOTYPE</scope>
</reference>
<reference key="7">
    <citation type="journal article" date="2006" name="Plant J.">
        <title>Regulation of hormone metabolism in Arabidopsis seeds: phytochrome regulation of abscisic acid metabolism and abscisic acid regulation of gibberellin metabolism.</title>
        <authorList>
            <person name="Seo M."/>
            <person name="Hanada A."/>
            <person name="Kuwahara A."/>
            <person name="Endo A."/>
            <person name="Okamoto M."/>
            <person name="Yamauchi Y."/>
            <person name="North H."/>
            <person name="Marion-Poll A."/>
            <person name="Sun T.P."/>
            <person name="Koshiba T."/>
            <person name="Kamiya Y."/>
            <person name="Yamaguchi S."/>
            <person name="Nambara E."/>
        </authorList>
    </citation>
    <scope>INDUCTION BY PHYTOCHROME B</scope>
</reference>
<dbReference type="EC" id="1.14.14.137" evidence="2"/>
<dbReference type="EMBL" id="AB122150">
    <property type="protein sequence ID" value="BAD16630.1"/>
    <property type="molecule type" value="mRNA"/>
</dbReference>
<dbReference type="EMBL" id="AB020744">
    <property type="protein sequence ID" value="BAB10255.1"/>
    <property type="molecule type" value="Genomic_DNA"/>
</dbReference>
<dbReference type="EMBL" id="CP002688">
    <property type="protein sequence ID" value="AED95234.1"/>
    <property type="molecule type" value="Genomic_DNA"/>
</dbReference>
<dbReference type="EMBL" id="CP002688">
    <property type="protein sequence ID" value="AED95235.1"/>
    <property type="molecule type" value="Genomic_DNA"/>
</dbReference>
<dbReference type="EMBL" id="AY065065">
    <property type="protein sequence ID" value="AAL57698.1"/>
    <property type="molecule type" value="mRNA"/>
</dbReference>
<dbReference type="EMBL" id="AY102136">
    <property type="protein sequence ID" value="AAM26703.1"/>
    <property type="molecule type" value="mRNA"/>
</dbReference>
<dbReference type="RefSeq" id="NP_199347.2">
    <molecule id="Q9FH76-2"/>
    <property type="nucleotide sequence ID" value="NM_123902.3"/>
</dbReference>
<dbReference type="RefSeq" id="NP_851136.1">
    <molecule id="Q9FH76-1"/>
    <property type="nucleotide sequence ID" value="NM_180805.4"/>
</dbReference>
<dbReference type="SMR" id="Q9FH76"/>
<dbReference type="FunCoup" id="Q9FH76">
    <property type="interactions" value="214"/>
</dbReference>
<dbReference type="STRING" id="3702.Q9FH76"/>
<dbReference type="BindingDB" id="Q9FH76"/>
<dbReference type="ChEMBL" id="CHEMBL4538"/>
<dbReference type="iPTMnet" id="Q9FH76"/>
<dbReference type="PaxDb" id="3702-AT5G45340.1"/>
<dbReference type="ProteomicsDB" id="245116">
    <molecule id="Q9FH76-1"/>
</dbReference>
<dbReference type="EnsemblPlants" id="AT5G45340.1">
    <molecule id="Q9FH76-1"/>
    <property type="protein sequence ID" value="AT5G45340.1"/>
    <property type="gene ID" value="AT5G45340"/>
</dbReference>
<dbReference type="EnsemblPlants" id="AT5G45340.2">
    <molecule id="Q9FH76-2"/>
    <property type="protein sequence ID" value="AT5G45340.2"/>
    <property type="gene ID" value="AT5G45340"/>
</dbReference>
<dbReference type="GeneID" id="834570"/>
<dbReference type="Gramene" id="AT5G45340.1">
    <molecule id="Q9FH76-1"/>
    <property type="protein sequence ID" value="AT5G45340.1"/>
    <property type="gene ID" value="AT5G45340"/>
</dbReference>
<dbReference type="Gramene" id="AT5G45340.2">
    <molecule id="Q9FH76-2"/>
    <property type="protein sequence ID" value="AT5G45340.2"/>
    <property type="gene ID" value="AT5G45340"/>
</dbReference>
<dbReference type="KEGG" id="ath:AT5G45340"/>
<dbReference type="Araport" id="AT5G45340"/>
<dbReference type="TAIR" id="AT5G45340">
    <property type="gene designation" value="CYP707A3"/>
</dbReference>
<dbReference type="eggNOG" id="KOG0157">
    <property type="taxonomic scope" value="Eukaryota"/>
</dbReference>
<dbReference type="HOGENOM" id="CLU_001570_15_5_1"/>
<dbReference type="InParanoid" id="Q9FH76"/>
<dbReference type="OMA" id="MRVICEL"/>
<dbReference type="PhylomeDB" id="Q9FH76"/>
<dbReference type="BioCyc" id="ARA:AT5G45340-MONOMER"/>
<dbReference type="BioCyc" id="MetaCyc:AT5G45340-MONOMER"/>
<dbReference type="BRENDA" id="1.14.14.137">
    <property type="organism ID" value="399"/>
</dbReference>
<dbReference type="SABIO-RK" id="Q9FH76"/>
<dbReference type="UniPathway" id="UPA00093"/>
<dbReference type="PRO" id="PR:Q9FH76"/>
<dbReference type="Proteomes" id="UP000006548">
    <property type="component" value="Chromosome 5"/>
</dbReference>
<dbReference type="ExpressionAtlas" id="Q9FH76">
    <property type="expression patterns" value="baseline and differential"/>
</dbReference>
<dbReference type="GO" id="GO:0016020">
    <property type="term" value="C:membrane"/>
    <property type="evidence" value="ECO:0007669"/>
    <property type="project" value="UniProtKB-SubCell"/>
</dbReference>
<dbReference type="GO" id="GO:0010295">
    <property type="term" value="F:(+)-abscisic acid 8'-hydroxylase activity"/>
    <property type="evidence" value="ECO:0000314"/>
    <property type="project" value="TAIR"/>
</dbReference>
<dbReference type="GO" id="GO:0020037">
    <property type="term" value="F:heme binding"/>
    <property type="evidence" value="ECO:0007669"/>
    <property type="project" value="InterPro"/>
</dbReference>
<dbReference type="GO" id="GO:0005506">
    <property type="term" value="F:iron ion binding"/>
    <property type="evidence" value="ECO:0007669"/>
    <property type="project" value="InterPro"/>
</dbReference>
<dbReference type="GO" id="GO:0046345">
    <property type="term" value="P:abscisic acid catabolic process"/>
    <property type="evidence" value="ECO:0000304"/>
    <property type="project" value="TAIR"/>
</dbReference>
<dbReference type="GO" id="GO:0071456">
    <property type="term" value="P:cellular response to hypoxia"/>
    <property type="evidence" value="ECO:0007007"/>
    <property type="project" value="TAIR"/>
</dbReference>
<dbReference type="GO" id="GO:0009639">
    <property type="term" value="P:response to red or far red light"/>
    <property type="evidence" value="ECO:0000270"/>
    <property type="project" value="TAIR"/>
</dbReference>
<dbReference type="GO" id="GO:0009414">
    <property type="term" value="P:response to water deprivation"/>
    <property type="evidence" value="ECO:0000315"/>
    <property type="project" value="TAIR"/>
</dbReference>
<dbReference type="CDD" id="cd11043">
    <property type="entry name" value="CYP90-like"/>
    <property type="match status" value="1"/>
</dbReference>
<dbReference type="FunFam" id="1.10.630.10:FF:000014">
    <property type="entry name" value="Abscisic acid 8"/>
    <property type="match status" value="1"/>
</dbReference>
<dbReference type="Gene3D" id="1.10.630.10">
    <property type="entry name" value="Cytochrome P450"/>
    <property type="match status" value="1"/>
</dbReference>
<dbReference type="InterPro" id="IPR001128">
    <property type="entry name" value="Cyt_P450"/>
</dbReference>
<dbReference type="InterPro" id="IPR017972">
    <property type="entry name" value="Cyt_P450_CS"/>
</dbReference>
<dbReference type="InterPro" id="IPR002401">
    <property type="entry name" value="Cyt_P450_E_grp-I"/>
</dbReference>
<dbReference type="InterPro" id="IPR036396">
    <property type="entry name" value="Cyt_P450_sf"/>
</dbReference>
<dbReference type="PANTHER" id="PTHR24286:SF355">
    <property type="entry name" value="ABSCISIC ACID 8'-HYDROXYLASE 3"/>
    <property type="match status" value="1"/>
</dbReference>
<dbReference type="PANTHER" id="PTHR24286">
    <property type="entry name" value="CYTOCHROME P450 26"/>
    <property type="match status" value="1"/>
</dbReference>
<dbReference type="Pfam" id="PF00067">
    <property type="entry name" value="p450"/>
    <property type="match status" value="1"/>
</dbReference>
<dbReference type="PRINTS" id="PR00463">
    <property type="entry name" value="EP450I"/>
</dbReference>
<dbReference type="PRINTS" id="PR00385">
    <property type="entry name" value="P450"/>
</dbReference>
<dbReference type="SUPFAM" id="SSF48264">
    <property type="entry name" value="Cytochrome P450"/>
    <property type="match status" value="1"/>
</dbReference>
<dbReference type="PROSITE" id="PS00086">
    <property type="entry name" value="CYTOCHROME_P450"/>
    <property type="match status" value="1"/>
</dbReference>
<comment type="function">
    <text evidence="4 5 6">Involved in the oxidative degradation of abscisic acid, but not in the isomerization of the produced 8'-hydroxyabscisic acid (8'-OH-ABA) to (-)-phaseic acid (PA). Involved in the control of postgermination growth.</text>
</comment>
<comment type="catalytic activity">
    <reaction evidence="2">
        <text>2-cis-(+)-abscisate + reduced [NADPH--hemoprotein reductase] + O2 = (+)-8'-hydroxyabscisate + oxidized [NADPH--hemoprotein reductase] + H2O + H(+)</text>
        <dbReference type="Rhea" id="RHEA:12897"/>
        <dbReference type="Rhea" id="RHEA-COMP:11964"/>
        <dbReference type="Rhea" id="RHEA-COMP:11965"/>
        <dbReference type="ChEBI" id="CHEBI:15377"/>
        <dbReference type="ChEBI" id="CHEBI:15378"/>
        <dbReference type="ChEBI" id="CHEBI:15379"/>
        <dbReference type="ChEBI" id="CHEBI:37569"/>
        <dbReference type="ChEBI" id="CHEBI:57618"/>
        <dbReference type="ChEBI" id="CHEBI:58210"/>
        <dbReference type="ChEBI" id="CHEBI:58490"/>
        <dbReference type="EC" id="1.14.14.137"/>
    </reaction>
</comment>
<comment type="cofactor">
    <cofactor evidence="1">
        <name>heme</name>
        <dbReference type="ChEBI" id="CHEBI:30413"/>
    </cofactor>
</comment>
<comment type="activity regulation">
    <text evidence="4">Inhibited by tetcyclcis, but not by metyrapone.</text>
</comment>
<comment type="biophysicochemical properties">
    <kinetics>
        <KM evidence="5">1.3 uM for (+)-ABA</KM>
    </kinetics>
</comment>
<comment type="pathway">
    <text>Plant hormone degradation; abscisic acid degradation.</text>
</comment>
<comment type="subcellular location">
    <subcellularLocation>
        <location evidence="8">Membrane</location>
        <topology evidence="8">Single-pass membrane protein</topology>
    </subcellularLocation>
</comment>
<comment type="alternative products">
    <event type="alternative splicing"/>
    <isoform>
        <id>Q9FH76-1</id>
        <name>1</name>
        <sequence type="displayed"/>
    </isoform>
    <isoform>
        <id>Q9FH76-2</id>
        <name>2</name>
        <sequence type="described" ref="VSP_025739 VSP_025740"/>
    </isoform>
</comment>
<comment type="tissue specificity">
    <text evidence="4 5">Mainly expressed in flower buds, flowers, rosette leaves and roots. Lower expression in mature siliques and inflorescence stems. Not expressed in dry seeds.</text>
</comment>
<comment type="developmental stage">
    <text evidence="4">Up-regulated 12 hours after imbibition.</text>
</comment>
<comment type="induction">
    <text evidence="4 5 6 7">By abscisic acid, brassinosteroid or gibberellin treatments, by salt or osmotic stresses, and by dehydration and rehydration. Expression regulated by phytochrome B.</text>
</comment>
<comment type="disruption phenotype">
    <text evidence="6">Plants are not affected in seed germination, but show a restricted greening rate after germination and increase the drought resistance.</text>
</comment>
<comment type="miscellaneous">
    <molecule>Isoform 2</molecule>
    <text evidence="8">May be due to an intron retention.</text>
</comment>
<comment type="similarity">
    <text evidence="8">Belongs to the cytochrome P450 family.</text>
</comment>
<evidence type="ECO:0000250" key="1"/>
<evidence type="ECO:0000250" key="2">
    <source>
        <dbReference type="UniProtKB" id="Q949P1"/>
    </source>
</evidence>
<evidence type="ECO:0000255" key="3"/>
<evidence type="ECO:0000269" key="4">
    <source>
    </source>
</evidence>
<evidence type="ECO:0000269" key="5">
    <source>
    </source>
</evidence>
<evidence type="ECO:0000269" key="6">
    <source>
    </source>
</evidence>
<evidence type="ECO:0000269" key="7">
    <source>
    </source>
</evidence>
<evidence type="ECO:0000305" key="8"/>
<protein>
    <recommendedName>
        <fullName>Abscisic acid 8'-hydroxylase 3</fullName>
        <shortName>ABA 8'-hydroxylase 3</shortName>
        <ecNumber evidence="2">1.14.14.137</ecNumber>
    </recommendedName>
    <alternativeName>
        <fullName>Cytochrome P450 707A3</fullName>
    </alternativeName>
</protein>